<name>MTD22_STREE</name>
<comment type="function">
    <text evidence="1 2 3">A beta subtype methylase that recognizes the single- or double-stranded sequence 5'-GATC-3', methylates A-2 on one or both strands (respectively), and protects the DNA from cleavage by the DpnII endonuclease. Further methylates DNA that is already methylated at 5'-GATC-3' sites. Essential for establishment of a previously unmethylated plasmid transformed into the cell as single-stranded DNA, enhances plasmid transfer to DpnII-containing strains of Streptococcus pneumoniae.</text>
</comment>
<comment type="catalytic activity">
    <reaction evidence="1 7">
        <text>a 2'-deoxyadenosine in DNA + S-adenosyl-L-methionine = an N(6)-methyl-2'-deoxyadenosine in DNA + S-adenosyl-L-homocysteine + H(+)</text>
        <dbReference type="Rhea" id="RHEA:15197"/>
        <dbReference type="Rhea" id="RHEA-COMP:12418"/>
        <dbReference type="Rhea" id="RHEA-COMP:12419"/>
        <dbReference type="ChEBI" id="CHEBI:15378"/>
        <dbReference type="ChEBI" id="CHEBI:57856"/>
        <dbReference type="ChEBI" id="CHEBI:59789"/>
        <dbReference type="ChEBI" id="CHEBI:90615"/>
        <dbReference type="ChEBI" id="CHEBI:90616"/>
        <dbReference type="EC" id="2.1.1.72"/>
    </reaction>
</comment>
<comment type="subunit">
    <text evidence="7">Homodimer.</text>
</comment>
<comment type="alternative products">
    <event type="alternative initiation"/>
    <isoform>
        <id>P09358-1</id>
        <name>1</name>
        <sequence type="displayed"/>
    </isoform>
    <isoform>
        <id>P09358-2</id>
        <name>2</name>
        <sequence type="described" ref="VSP_018869"/>
    </isoform>
</comment>
<comment type="miscellaneous">
    <text evidence="2">The DpnII restriction system has two different methylases.</text>
</comment>
<comment type="miscellaneous">
    <molecule>Isoform 2</molecule>
    <text evidence="6">Produced in response to the induction of competence for genetic transformation.</text>
</comment>
<comment type="similarity">
    <text evidence="6">Belongs to the N(4)/N(6)-methyltransferase family.</text>
</comment>
<reference key="1">
    <citation type="journal article" date="1986" name="Cell">
        <title>Genetic basis of the complementary DpnI and DpnII restriction systems of S. pneumoniae: an intercellular cassette mechanism.</title>
        <authorList>
            <person name="Lacks S.A."/>
            <person name="Mannarelli B.M."/>
            <person name="Springhorn S.S."/>
            <person name="Greenberg B."/>
        </authorList>
    </citation>
    <scope>NUCLEOTIDE SEQUENCE [GENOMIC DNA] (ISOFORM 2)</scope>
    <source>
        <strain>697</strain>
    </source>
</reference>
<reference key="2">
    <citation type="journal article" date="2000" name="Mol. Microbiol.">
        <title>Regulation of competence for genetic transformation in Streptococcus pneumoniae: expression of dpnA, a late competence gene encoding a DNA methyltransferase of the DpnII restriction system.</title>
        <authorList>
            <person name="Lacks S.A."/>
            <person name="Ayalew S."/>
            <person name="de la Campa A.G."/>
            <person name="Greenberg B."/>
        </authorList>
    </citation>
    <scope>NUCLEOTIDE SEQUENCE [GENOMIC DNA] (ISOFORMS 1 AND 2)</scope>
    <scope>SEQUENCE REVISION TO N-TERMINUS</scope>
    <scope>ALTERNATIVE INITIATION</scope>
</reference>
<reference key="3">
    <citation type="journal article" date="1987" name="J. Mol. Biol.">
        <title>Proteins encoded by the DpnII restriction gene cassette. Two methylases and an endonuclease.</title>
        <authorList>
            <person name="de la Campa A.G."/>
            <person name="Purushottam K."/>
            <person name="Springhorn S.S."/>
            <person name="Lacks S.A."/>
        </authorList>
    </citation>
    <scope>PROTEIN SEQUENCE OF 1-13 (ISOFORM 1)</scope>
    <scope>FUNCTION</scope>
    <scope>SUBUNIT</scope>
</reference>
<reference key="4">
    <citation type="journal article" date="1989" name="Proc. Natl. Acad. Sci. U.S.A.">
        <title>DpnA, a methylase for single-strand DNA in the Dpn II restriction system, and its biological function.</title>
        <authorList>
            <person name="Cerritelli S."/>
            <person name="Springhorn S.S."/>
            <person name="Lacks S.A."/>
        </authorList>
    </citation>
    <scope>FUNCTION</scope>
    <scope>CATALYTIC ACTIVITY</scope>
</reference>
<reference key="5">
    <citation type="journal article" date="2003" name="Nucleic Acids Res.">
        <title>A nomenclature for restriction enzymes, DNA methyltransferases, homing endonucleases and their genes.</title>
        <authorList>
            <person name="Roberts R.J."/>
            <person name="Belfort M."/>
            <person name="Bestor T."/>
            <person name="Bhagwat A.S."/>
            <person name="Bickle T.A."/>
            <person name="Bitinaite J."/>
            <person name="Blumenthal R.M."/>
            <person name="Degtyarev S.K."/>
            <person name="Dryden D.T."/>
            <person name="Dybvig K."/>
            <person name="Firman K."/>
            <person name="Gromova E.S."/>
            <person name="Gumport R.I."/>
            <person name="Halford S.E."/>
            <person name="Hattman S."/>
            <person name="Heitman J."/>
            <person name="Hornby D.P."/>
            <person name="Janulaitis A."/>
            <person name="Jeltsch A."/>
            <person name="Josephsen J."/>
            <person name="Kiss A."/>
            <person name="Klaenhammer T.R."/>
            <person name="Kobayashi I."/>
            <person name="Kong H."/>
            <person name="Krueger D.H."/>
            <person name="Lacks S."/>
            <person name="Marinus M.G."/>
            <person name="Miyahara M."/>
            <person name="Morgan R.D."/>
            <person name="Murray N.E."/>
            <person name="Nagaraja V."/>
            <person name="Piekarowicz A."/>
            <person name="Pingoud A."/>
            <person name="Raleigh E."/>
            <person name="Rao D.N."/>
            <person name="Reich N."/>
            <person name="Repin V.E."/>
            <person name="Selker E.U."/>
            <person name="Shaw P.C."/>
            <person name="Stein D.C."/>
            <person name="Stoddard B.L."/>
            <person name="Szybalski W."/>
            <person name="Trautner T.A."/>
            <person name="Van Etten J.L."/>
            <person name="Vitor J.M."/>
            <person name="Wilson G.G."/>
            <person name="Xu S.Y."/>
        </authorList>
    </citation>
    <scope>NOMENCLATURE</scope>
    <scope>SUBTYPE</scope>
</reference>
<dbReference type="EC" id="2.1.1.72" evidence="1"/>
<dbReference type="EMBL" id="M14339">
    <property type="protein sequence ID" value="AAA88581.2"/>
    <property type="molecule type" value="Genomic_DNA"/>
</dbReference>
<dbReference type="PIR" id="A24372">
    <property type="entry name" value="A24372"/>
</dbReference>
<dbReference type="SMR" id="P09358"/>
<dbReference type="REBASE" id="3637">
    <property type="entry name" value="M2.DpnII"/>
</dbReference>
<dbReference type="PATRIC" id="fig|1313.6513.peg.2192"/>
<dbReference type="PRO" id="PR:P09358"/>
<dbReference type="GO" id="GO:0005737">
    <property type="term" value="C:cytoplasm"/>
    <property type="evidence" value="ECO:0007669"/>
    <property type="project" value="TreeGrafter"/>
</dbReference>
<dbReference type="GO" id="GO:0003677">
    <property type="term" value="F:DNA binding"/>
    <property type="evidence" value="ECO:0007669"/>
    <property type="project" value="UniProtKB-KW"/>
</dbReference>
<dbReference type="GO" id="GO:0008170">
    <property type="term" value="F:N-methyltransferase activity"/>
    <property type="evidence" value="ECO:0007669"/>
    <property type="project" value="InterPro"/>
</dbReference>
<dbReference type="GO" id="GO:0009007">
    <property type="term" value="F:site-specific DNA-methyltransferase (adenine-specific) activity"/>
    <property type="evidence" value="ECO:0007669"/>
    <property type="project" value="UniProtKB-EC"/>
</dbReference>
<dbReference type="GO" id="GO:0009307">
    <property type="term" value="P:DNA restriction-modification system"/>
    <property type="evidence" value="ECO:0007669"/>
    <property type="project" value="UniProtKB-KW"/>
</dbReference>
<dbReference type="GO" id="GO:0032259">
    <property type="term" value="P:methylation"/>
    <property type="evidence" value="ECO:0007669"/>
    <property type="project" value="UniProtKB-KW"/>
</dbReference>
<dbReference type="CDD" id="cd02440">
    <property type="entry name" value="AdoMet_MTases"/>
    <property type="match status" value="1"/>
</dbReference>
<dbReference type="Gene3D" id="3.40.50.150">
    <property type="entry name" value="Vaccinia Virus protein VP39"/>
    <property type="match status" value="1"/>
</dbReference>
<dbReference type="InterPro" id="IPR002941">
    <property type="entry name" value="DNA_methylase_N4/N6"/>
</dbReference>
<dbReference type="InterPro" id="IPR002052">
    <property type="entry name" value="DNA_methylase_N6_adenine_CS"/>
</dbReference>
<dbReference type="InterPro" id="IPR001091">
    <property type="entry name" value="RM_Methyltransferase"/>
</dbReference>
<dbReference type="InterPro" id="IPR029063">
    <property type="entry name" value="SAM-dependent_MTases_sf"/>
</dbReference>
<dbReference type="PANTHER" id="PTHR13370">
    <property type="entry name" value="RNA METHYLASE-RELATED"/>
    <property type="match status" value="1"/>
</dbReference>
<dbReference type="PANTHER" id="PTHR13370:SF3">
    <property type="entry name" value="TRNA (GUANINE(10)-N2)-METHYLTRANSFERASE HOMOLOG"/>
    <property type="match status" value="1"/>
</dbReference>
<dbReference type="Pfam" id="PF01555">
    <property type="entry name" value="N6_N4_Mtase"/>
    <property type="match status" value="1"/>
</dbReference>
<dbReference type="PRINTS" id="PR00508">
    <property type="entry name" value="S21N4MTFRASE"/>
</dbReference>
<dbReference type="SUPFAM" id="SSF53335">
    <property type="entry name" value="S-adenosyl-L-methionine-dependent methyltransferases"/>
    <property type="match status" value="1"/>
</dbReference>
<dbReference type="PROSITE" id="PS00092">
    <property type="entry name" value="N6_MTASE"/>
    <property type="match status" value="1"/>
</dbReference>
<feature type="chain" id="PRO_0000030349" description="Type II methyltransferase M2.DpnII">
    <location>
        <begin position="1"/>
        <end position="268"/>
    </location>
</feature>
<feature type="splice variant" id="VSP_018869" description="In isoform 2." evidence="6">
    <location>
        <begin position="1"/>
        <end position="12"/>
    </location>
</feature>
<organism>
    <name type="scientific">Streptococcus pneumoniae</name>
    <dbReference type="NCBI Taxonomy" id="1313"/>
    <lineage>
        <taxon>Bacteria</taxon>
        <taxon>Bacillati</taxon>
        <taxon>Bacillota</taxon>
        <taxon>Bacilli</taxon>
        <taxon>Lactobacillales</taxon>
        <taxon>Streptococcaceae</taxon>
        <taxon>Streptococcus</taxon>
    </lineage>
</organism>
<evidence type="ECO:0000269" key="1">
    <source>
    </source>
</evidence>
<evidence type="ECO:0000269" key="2">
    <source>
    </source>
</evidence>
<evidence type="ECO:0000303" key="3">
    <source>
    </source>
</evidence>
<evidence type="ECO:0000303" key="4">
    <source>
    </source>
</evidence>
<evidence type="ECO:0000303" key="5">
    <source>
    </source>
</evidence>
<evidence type="ECO:0000305" key="6"/>
<evidence type="ECO:0000305" key="7">
    <source>
    </source>
</evidence>
<proteinExistence type="evidence at protein level"/>
<gene>
    <name evidence="5" type="primary">dpnA</name>
</gene>
<sequence length="268" mass="30922">MKNNEYKYGGVLMTKPYYNKNKMILVHSDTFKFLSKMKPESMDMIFADPPYFLSNGGISNSGGQVVSVDKGDWDKISSFEEKHEFNRKWIRLAKEVLKPNGTVWISGSLHNIYSVGMALEQEGFKILNNITWQKTNPAPNLSCRYFTHSTETILWARKNDKKARHYYNYDLMKELNDGKQMKDVWTGSLTKKVEKWAGKHPTQKPEYLLERIILASTKEGDYILDPFVGSGTTGVVAKRLGRRFIGIDAEKEYLKIARKRLEAENETN</sequence>
<accession>P09358</accession>
<protein>
    <recommendedName>
        <fullName evidence="3">Type II methyltransferase M2.DpnII</fullName>
        <shortName evidence="3">M2.DpnII</shortName>
        <ecNumber evidence="1">2.1.1.72</ecNumber>
    </recommendedName>
    <alternativeName>
        <fullName evidence="4">Adenine-specific methyltransferase DpnA</fullName>
    </alternativeName>
    <alternativeName>
        <fullName>M.DpnII 2</fullName>
    </alternativeName>
    <alternativeName>
        <fullName>Modification methylase DpnIIB</fullName>
    </alternativeName>
</protein>
<keyword id="KW-0024">Alternative initiation</keyword>
<keyword id="KW-0903">Direct protein sequencing</keyword>
<keyword id="KW-0238">DNA-binding</keyword>
<keyword id="KW-0489">Methyltransferase</keyword>
<keyword id="KW-0680">Restriction system</keyword>
<keyword id="KW-0949">S-adenosyl-L-methionine</keyword>
<keyword id="KW-0808">Transferase</keyword>